<accession>Q9SUB1</accession>
<accession>C0SVI4</accession>
<keyword id="KW-0238">DNA-binding</keyword>
<keyword id="KW-0479">Metal-binding</keyword>
<keyword id="KW-0539">Nucleus</keyword>
<keyword id="KW-1185">Reference proteome</keyword>
<keyword id="KW-0804">Transcription</keyword>
<keyword id="KW-0805">Transcription regulation</keyword>
<keyword id="KW-0862">Zinc</keyword>
<keyword id="KW-0863">Zinc-finger</keyword>
<gene>
    <name type="primary">DOF4.2</name>
    <name type="ordered locus">At4g21030</name>
    <name type="ORF">T13K14.190</name>
</gene>
<name>DOF42_ARATH</name>
<evidence type="ECO:0000250" key="1"/>
<evidence type="ECO:0000255" key="2">
    <source>
        <dbReference type="PROSITE-ProRule" id="PRU00071"/>
    </source>
</evidence>
<evidence type="ECO:0000305" key="3"/>
<proteinExistence type="inferred from homology"/>
<feature type="chain" id="PRO_0000074285" description="Dof zinc finger protein DOF4.2">
    <location>
        <begin position="1"/>
        <end position="194"/>
    </location>
</feature>
<feature type="zinc finger region" description="Dof-type" evidence="2">
    <location>
        <begin position="21"/>
        <end position="75"/>
    </location>
</feature>
<feature type="binding site" evidence="2">
    <location>
        <position position="23"/>
    </location>
    <ligand>
        <name>Zn(2+)</name>
        <dbReference type="ChEBI" id="CHEBI:29105"/>
    </ligand>
</feature>
<feature type="binding site" evidence="2">
    <location>
        <position position="26"/>
    </location>
    <ligand>
        <name>Zn(2+)</name>
        <dbReference type="ChEBI" id="CHEBI:29105"/>
    </ligand>
</feature>
<feature type="binding site" evidence="2">
    <location>
        <position position="48"/>
    </location>
    <ligand>
        <name>Zn(2+)</name>
        <dbReference type="ChEBI" id="CHEBI:29105"/>
    </ligand>
</feature>
<feature type="binding site" evidence="2">
    <location>
        <position position="51"/>
    </location>
    <ligand>
        <name>Zn(2+)</name>
        <dbReference type="ChEBI" id="CHEBI:29105"/>
    </ligand>
</feature>
<organism>
    <name type="scientific">Arabidopsis thaliana</name>
    <name type="common">Mouse-ear cress</name>
    <dbReference type="NCBI Taxonomy" id="3702"/>
    <lineage>
        <taxon>Eukaryota</taxon>
        <taxon>Viridiplantae</taxon>
        <taxon>Streptophyta</taxon>
        <taxon>Embryophyta</taxon>
        <taxon>Tracheophyta</taxon>
        <taxon>Spermatophyta</taxon>
        <taxon>Magnoliopsida</taxon>
        <taxon>eudicotyledons</taxon>
        <taxon>Gunneridae</taxon>
        <taxon>Pentapetalae</taxon>
        <taxon>rosids</taxon>
        <taxon>malvids</taxon>
        <taxon>Brassicales</taxon>
        <taxon>Brassicaceae</taxon>
        <taxon>Camelineae</taxon>
        <taxon>Arabidopsis</taxon>
    </lineage>
</organism>
<sequence length="194" mass="22108">MNNLNVFTNEDNEMNVMPPPRVCPRCYSDQTRFSYFNNNKKSQPRYKCKNCCRCWTHGGVLRNIPVTGICDKSNLPKIDQSSVSQMILAEIQQGNHQPFKKFQENISVSVSSSSDVSIVGNHFDDLSELHGITNSTPIRSFTMDRLDFGEESFQQDLYDVGSNDLIGNPLINQSIGGYVDNHKDEHKLQFEYES</sequence>
<protein>
    <recommendedName>
        <fullName>Dof zinc finger protein DOF4.2</fullName>
        <shortName>AtDOF4.2</shortName>
    </recommendedName>
</protein>
<reference key="1">
    <citation type="journal article" date="1999" name="Nature">
        <title>Sequence and analysis of chromosome 4 of the plant Arabidopsis thaliana.</title>
        <authorList>
            <person name="Mayer K.F.X."/>
            <person name="Schueller C."/>
            <person name="Wambutt R."/>
            <person name="Murphy G."/>
            <person name="Volckaert G."/>
            <person name="Pohl T."/>
            <person name="Duesterhoeft A."/>
            <person name="Stiekema W."/>
            <person name="Entian K.-D."/>
            <person name="Terryn N."/>
            <person name="Harris B."/>
            <person name="Ansorge W."/>
            <person name="Brandt P."/>
            <person name="Grivell L.A."/>
            <person name="Rieger M."/>
            <person name="Weichselgartner M."/>
            <person name="de Simone V."/>
            <person name="Obermaier B."/>
            <person name="Mache R."/>
            <person name="Mueller M."/>
            <person name="Kreis M."/>
            <person name="Delseny M."/>
            <person name="Puigdomenech P."/>
            <person name="Watson M."/>
            <person name="Schmidtheini T."/>
            <person name="Reichert B."/>
            <person name="Portetelle D."/>
            <person name="Perez-Alonso M."/>
            <person name="Boutry M."/>
            <person name="Bancroft I."/>
            <person name="Vos P."/>
            <person name="Hoheisel J."/>
            <person name="Zimmermann W."/>
            <person name="Wedler H."/>
            <person name="Ridley P."/>
            <person name="Langham S.-A."/>
            <person name="McCullagh B."/>
            <person name="Bilham L."/>
            <person name="Robben J."/>
            <person name="van der Schueren J."/>
            <person name="Grymonprez B."/>
            <person name="Chuang Y.-J."/>
            <person name="Vandenbussche F."/>
            <person name="Braeken M."/>
            <person name="Weltjens I."/>
            <person name="Voet M."/>
            <person name="Bastiaens I."/>
            <person name="Aert R."/>
            <person name="Defoor E."/>
            <person name="Weitzenegger T."/>
            <person name="Bothe G."/>
            <person name="Ramsperger U."/>
            <person name="Hilbert H."/>
            <person name="Braun M."/>
            <person name="Holzer E."/>
            <person name="Brandt A."/>
            <person name="Peters S."/>
            <person name="van Staveren M."/>
            <person name="Dirkse W."/>
            <person name="Mooijman P."/>
            <person name="Klein Lankhorst R."/>
            <person name="Rose M."/>
            <person name="Hauf J."/>
            <person name="Koetter P."/>
            <person name="Berneiser S."/>
            <person name="Hempel S."/>
            <person name="Feldpausch M."/>
            <person name="Lamberth S."/>
            <person name="Van den Daele H."/>
            <person name="De Keyser A."/>
            <person name="Buysshaert C."/>
            <person name="Gielen J."/>
            <person name="Villarroel R."/>
            <person name="De Clercq R."/>
            <person name="van Montagu M."/>
            <person name="Rogers J."/>
            <person name="Cronin A."/>
            <person name="Quail M.A."/>
            <person name="Bray-Allen S."/>
            <person name="Clark L."/>
            <person name="Doggett J."/>
            <person name="Hall S."/>
            <person name="Kay M."/>
            <person name="Lennard N."/>
            <person name="McLay K."/>
            <person name="Mayes R."/>
            <person name="Pettett A."/>
            <person name="Rajandream M.A."/>
            <person name="Lyne M."/>
            <person name="Benes V."/>
            <person name="Rechmann S."/>
            <person name="Borkova D."/>
            <person name="Bloecker H."/>
            <person name="Scharfe M."/>
            <person name="Grimm M."/>
            <person name="Loehnert T.-H."/>
            <person name="Dose S."/>
            <person name="de Haan M."/>
            <person name="Maarse A.C."/>
            <person name="Schaefer M."/>
            <person name="Mueller-Auer S."/>
            <person name="Gabel C."/>
            <person name="Fuchs M."/>
            <person name="Fartmann B."/>
            <person name="Granderath K."/>
            <person name="Dauner D."/>
            <person name="Herzl A."/>
            <person name="Neumann S."/>
            <person name="Argiriou A."/>
            <person name="Vitale D."/>
            <person name="Liguori R."/>
            <person name="Piravandi E."/>
            <person name="Massenet O."/>
            <person name="Quigley F."/>
            <person name="Clabauld G."/>
            <person name="Muendlein A."/>
            <person name="Felber R."/>
            <person name="Schnabl S."/>
            <person name="Hiller R."/>
            <person name="Schmidt W."/>
            <person name="Lecharny A."/>
            <person name="Aubourg S."/>
            <person name="Chefdor F."/>
            <person name="Cooke R."/>
            <person name="Berger C."/>
            <person name="Monfort A."/>
            <person name="Casacuberta E."/>
            <person name="Gibbons T."/>
            <person name="Weber N."/>
            <person name="Vandenbol M."/>
            <person name="Bargues M."/>
            <person name="Terol J."/>
            <person name="Torres A."/>
            <person name="Perez-Perez A."/>
            <person name="Purnelle B."/>
            <person name="Bent E."/>
            <person name="Johnson S."/>
            <person name="Tacon D."/>
            <person name="Jesse T."/>
            <person name="Heijnen L."/>
            <person name="Schwarz S."/>
            <person name="Scholler P."/>
            <person name="Heber S."/>
            <person name="Francs P."/>
            <person name="Bielke C."/>
            <person name="Frishman D."/>
            <person name="Haase D."/>
            <person name="Lemcke K."/>
            <person name="Mewes H.-W."/>
            <person name="Stocker S."/>
            <person name="Zaccaria P."/>
            <person name="Bevan M."/>
            <person name="Wilson R.K."/>
            <person name="de la Bastide M."/>
            <person name="Habermann K."/>
            <person name="Parnell L."/>
            <person name="Dedhia N."/>
            <person name="Gnoj L."/>
            <person name="Schutz K."/>
            <person name="Huang E."/>
            <person name="Spiegel L."/>
            <person name="Sekhon M."/>
            <person name="Murray J."/>
            <person name="Sheet P."/>
            <person name="Cordes M."/>
            <person name="Abu-Threideh J."/>
            <person name="Stoneking T."/>
            <person name="Kalicki J."/>
            <person name="Graves T."/>
            <person name="Harmon G."/>
            <person name="Edwards J."/>
            <person name="Latreille P."/>
            <person name="Courtney L."/>
            <person name="Cloud J."/>
            <person name="Abbott A."/>
            <person name="Scott K."/>
            <person name="Johnson D."/>
            <person name="Minx P."/>
            <person name="Bentley D."/>
            <person name="Fulton B."/>
            <person name="Miller N."/>
            <person name="Greco T."/>
            <person name="Kemp K."/>
            <person name="Kramer J."/>
            <person name="Fulton L."/>
            <person name="Mardis E."/>
            <person name="Dante M."/>
            <person name="Pepin K."/>
            <person name="Hillier L.W."/>
            <person name="Nelson J."/>
            <person name="Spieth J."/>
            <person name="Ryan E."/>
            <person name="Andrews S."/>
            <person name="Geisel C."/>
            <person name="Layman D."/>
            <person name="Du H."/>
            <person name="Ali J."/>
            <person name="Berghoff A."/>
            <person name="Jones K."/>
            <person name="Drone K."/>
            <person name="Cotton M."/>
            <person name="Joshu C."/>
            <person name="Antonoiu B."/>
            <person name="Zidanic M."/>
            <person name="Strong C."/>
            <person name="Sun H."/>
            <person name="Lamar B."/>
            <person name="Yordan C."/>
            <person name="Ma P."/>
            <person name="Zhong J."/>
            <person name="Preston R."/>
            <person name="Vil D."/>
            <person name="Shekher M."/>
            <person name="Matero A."/>
            <person name="Shah R."/>
            <person name="Swaby I.K."/>
            <person name="O'Shaughnessy A."/>
            <person name="Rodriguez M."/>
            <person name="Hoffman J."/>
            <person name="Till S."/>
            <person name="Granat S."/>
            <person name="Shohdy N."/>
            <person name="Hasegawa A."/>
            <person name="Hameed A."/>
            <person name="Lodhi M."/>
            <person name="Johnson A."/>
            <person name="Chen E."/>
            <person name="Marra M.A."/>
            <person name="Martienssen R."/>
            <person name="McCombie W.R."/>
        </authorList>
    </citation>
    <scope>NUCLEOTIDE SEQUENCE [LARGE SCALE GENOMIC DNA]</scope>
    <source>
        <strain>cv. Columbia</strain>
    </source>
</reference>
<reference key="2">
    <citation type="journal article" date="2017" name="Plant J.">
        <title>Araport11: a complete reannotation of the Arabidopsis thaliana reference genome.</title>
        <authorList>
            <person name="Cheng C.Y."/>
            <person name="Krishnakumar V."/>
            <person name="Chan A.P."/>
            <person name="Thibaud-Nissen F."/>
            <person name="Schobel S."/>
            <person name="Town C.D."/>
        </authorList>
    </citation>
    <scope>GENOME REANNOTATION</scope>
    <source>
        <strain>cv. Columbia</strain>
    </source>
</reference>
<reference key="3">
    <citation type="submission" date="2009-03" db="EMBL/GenBank/DDBJ databases">
        <title>ORF cloning and analysis of Arabidopsis transcription factor genes.</title>
        <authorList>
            <person name="Fujita M."/>
            <person name="Mizukado S."/>
            <person name="Seki M."/>
            <person name="Shinozaki K."/>
            <person name="Mitsuda N."/>
            <person name="Takiguchi Y."/>
            <person name="Takagi M."/>
        </authorList>
    </citation>
    <scope>NUCLEOTIDE SEQUENCE [LARGE SCALE GENOMIC DNA]</scope>
</reference>
<reference key="4">
    <citation type="journal article" date="2002" name="Trends Plant Sci.">
        <title>The Dof family of plant transcription factors.</title>
        <authorList>
            <person name="Yanagisawa S."/>
        </authorList>
    </citation>
    <scope>GENE FAMILY</scope>
    <scope>NOMENCLATURE</scope>
</reference>
<dbReference type="EMBL" id="AL080282">
    <property type="protein sequence ID" value="CAB45898.1"/>
    <property type="molecule type" value="Genomic_DNA"/>
</dbReference>
<dbReference type="EMBL" id="AL161554">
    <property type="protein sequence ID" value="CAB79103.1"/>
    <property type="molecule type" value="Genomic_DNA"/>
</dbReference>
<dbReference type="EMBL" id="CP002687">
    <property type="protein sequence ID" value="AEE84389.1"/>
    <property type="molecule type" value="Genomic_DNA"/>
</dbReference>
<dbReference type="EMBL" id="AB493687">
    <property type="protein sequence ID" value="BAH30525.1"/>
    <property type="molecule type" value="Genomic_DNA"/>
</dbReference>
<dbReference type="PIR" id="T10645">
    <property type="entry name" value="T10645"/>
</dbReference>
<dbReference type="RefSeq" id="NP_193835.1">
    <property type="nucleotide sequence ID" value="NM_118221.1"/>
</dbReference>
<dbReference type="BioGRID" id="13141">
    <property type="interactions" value="1"/>
</dbReference>
<dbReference type="FunCoup" id="Q9SUB1">
    <property type="interactions" value="3"/>
</dbReference>
<dbReference type="STRING" id="3702.Q9SUB1"/>
<dbReference type="PaxDb" id="3702-AT4G21030.1"/>
<dbReference type="EnsemblPlants" id="AT4G21030.1">
    <property type="protein sequence ID" value="AT4G21030.1"/>
    <property type="gene ID" value="AT4G21030"/>
</dbReference>
<dbReference type="GeneID" id="827850"/>
<dbReference type="Gramene" id="AT4G21030.1">
    <property type="protein sequence ID" value="AT4G21030.1"/>
    <property type="gene ID" value="AT4G21030"/>
</dbReference>
<dbReference type="KEGG" id="ath:AT4G21030"/>
<dbReference type="Araport" id="AT4G21030"/>
<dbReference type="TAIR" id="AT4G21030">
    <property type="gene designation" value="ATDOF4.2"/>
</dbReference>
<dbReference type="HOGENOM" id="CLU_108202_0_0_1"/>
<dbReference type="InParanoid" id="Q9SUB1"/>
<dbReference type="OMA" id="CINQPIG"/>
<dbReference type="PhylomeDB" id="Q9SUB1"/>
<dbReference type="PRO" id="PR:Q9SUB1"/>
<dbReference type="Proteomes" id="UP000006548">
    <property type="component" value="Chromosome 4"/>
</dbReference>
<dbReference type="ExpressionAtlas" id="Q9SUB1">
    <property type="expression patterns" value="baseline"/>
</dbReference>
<dbReference type="GO" id="GO:0005634">
    <property type="term" value="C:nucleus"/>
    <property type="evidence" value="ECO:0000314"/>
    <property type="project" value="TAIR"/>
</dbReference>
<dbReference type="GO" id="GO:0003700">
    <property type="term" value="F:DNA-binding transcription factor activity"/>
    <property type="evidence" value="ECO:0000250"/>
    <property type="project" value="TAIR"/>
</dbReference>
<dbReference type="GO" id="GO:0043565">
    <property type="term" value="F:sequence-specific DNA binding"/>
    <property type="evidence" value="ECO:0000314"/>
    <property type="project" value="TAIR"/>
</dbReference>
<dbReference type="GO" id="GO:0008270">
    <property type="term" value="F:zinc ion binding"/>
    <property type="evidence" value="ECO:0007669"/>
    <property type="project" value="UniProtKB-KW"/>
</dbReference>
<dbReference type="GO" id="GO:0048825">
    <property type="term" value="P:cotyledon development"/>
    <property type="evidence" value="ECO:0000315"/>
    <property type="project" value="TAIR"/>
</dbReference>
<dbReference type="GO" id="GO:0048359">
    <property type="term" value="P:mucilage metabolic process involved in seed coat development"/>
    <property type="evidence" value="ECO:0000315"/>
    <property type="project" value="TAIR"/>
</dbReference>
<dbReference type="GO" id="GO:0045893">
    <property type="term" value="P:positive regulation of DNA-templated transcription"/>
    <property type="evidence" value="ECO:0000314"/>
    <property type="project" value="TAIR"/>
</dbReference>
<dbReference type="GO" id="GO:0006355">
    <property type="term" value="P:regulation of DNA-templated transcription"/>
    <property type="evidence" value="ECO:0000304"/>
    <property type="project" value="TAIR"/>
</dbReference>
<dbReference type="GO" id="GO:2000032">
    <property type="term" value="P:regulation of secondary shoot formation"/>
    <property type="evidence" value="ECO:0000315"/>
    <property type="project" value="TAIR"/>
</dbReference>
<dbReference type="GO" id="GO:0010214">
    <property type="term" value="P:seed coat development"/>
    <property type="evidence" value="ECO:0000315"/>
    <property type="project" value="TAIR"/>
</dbReference>
<dbReference type="InterPro" id="IPR045174">
    <property type="entry name" value="Dof"/>
</dbReference>
<dbReference type="InterPro" id="IPR003851">
    <property type="entry name" value="Znf_Dof"/>
</dbReference>
<dbReference type="PANTHER" id="PTHR31992">
    <property type="entry name" value="DOF ZINC FINGER PROTEIN DOF1.4-RELATED"/>
    <property type="match status" value="1"/>
</dbReference>
<dbReference type="PANTHER" id="PTHR31992:SF126">
    <property type="entry name" value="DOF ZINC FINGER PROTEIN DOF4.2-RELATED"/>
    <property type="match status" value="1"/>
</dbReference>
<dbReference type="Pfam" id="PF02701">
    <property type="entry name" value="Zn_ribbon_Dof"/>
    <property type="match status" value="1"/>
</dbReference>
<dbReference type="PROSITE" id="PS01361">
    <property type="entry name" value="ZF_DOF_1"/>
    <property type="match status" value="1"/>
</dbReference>
<dbReference type="PROSITE" id="PS50884">
    <property type="entry name" value="ZF_DOF_2"/>
    <property type="match status" value="1"/>
</dbReference>
<comment type="function">
    <text evidence="1">Transcription factor that binds specifically to a 5'-AA[AG]G-3' consensus core sequence.</text>
</comment>
<comment type="subcellular location">
    <subcellularLocation>
        <location evidence="3">Nucleus</location>
    </subcellularLocation>
</comment>